<protein>
    <recommendedName>
        <fullName>Autophagy-related protein 2</fullName>
    </recommendedName>
</protein>
<dbReference type="EMBL" id="CM001233">
    <property type="protein sequence ID" value="EHA52037.1"/>
    <property type="molecule type" value="Genomic_DNA"/>
</dbReference>
<dbReference type="RefSeq" id="XP_003711844.1">
    <property type="nucleotide sequence ID" value="XM_003711796.1"/>
</dbReference>
<dbReference type="STRING" id="242507.Q51ZN8"/>
<dbReference type="EnsemblFungi" id="MGG_16734T0">
    <property type="protein sequence ID" value="MGG_16734T0"/>
    <property type="gene ID" value="MGG_16734"/>
</dbReference>
<dbReference type="KEGG" id="mgr:MGG_16734"/>
<dbReference type="VEuPathDB" id="FungiDB:MGG_16734"/>
<dbReference type="eggNOG" id="KOG2993">
    <property type="taxonomic scope" value="Eukaryota"/>
</dbReference>
<dbReference type="HOGENOM" id="CLU_000626_1_0_1"/>
<dbReference type="InParanoid" id="Q51ZN8"/>
<dbReference type="OMA" id="AVWKRAP"/>
<dbReference type="OrthoDB" id="18982at2759"/>
<dbReference type="PHI-base" id="PHI:2070"/>
<dbReference type="Proteomes" id="UP000009058">
    <property type="component" value="Chromosome 3"/>
</dbReference>
<dbReference type="GO" id="GO:0005789">
    <property type="term" value="C:endoplasmic reticulum membrane"/>
    <property type="evidence" value="ECO:0007669"/>
    <property type="project" value="UniProtKB-SubCell"/>
</dbReference>
<dbReference type="GO" id="GO:0061908">
    <property type="term" value="C:phagophore"/>
    <property type="evidence" value="ECO:0007669"/>
    <property type="project" value="TreeGrafter"/>
</dbReference>
<dbReference type="GO" id="GO:0034045">
    <property type="term" value="C:phagophore assembly site membrane"/>
    <property type="evidence" value="ECO:0007669"/>
    <property type="project" value="UniProtKB-SubCell"/>
</dbReference>
<dbReference type="GO" id="GO:0032266">
    <property type="term" value="F:phosphatidylinositol-3-phosphate binding"/>
    <property type="evidence" value="ECO:0007669"/>
    <property type="project" value="TreeGrafter"/>
</dbReference>
<dbReference type="GO" id="GO:0043495">
    <property type="term" value="F:protein-membrane adaptor activity"/>
    <property type="evidence" value="ECO:0007669"/>
    <property type="project" value="TreeGrafter"/>
</dbReference>
<dbReference type="GO" id="GO:0000045">
    <property type="term" value="P:autophagosome assembly"/>
    <property type="evidence" value="ECO:0007669"/>
    <property type="project" value="TreeGrafter"/>
</dbReference>
<dbReference type="GO" id="GO:0000422">
    <property type="term" value="P:autophagy of mitochondrion"/>
    <property type="evidence" value="ECO:0007669"/>
    <property type="project" value="TreeGrafter"/>
</dbReference>
<dbReference type="GO" id="GO:0061723">
    <property type="term" value="P:glycophagy"/>
    <property type="evidence" value="ECO:0007669"/>
    <property type="project" value="TreeGrafter"/>
</dbReference>
<dbReference type="GO" id="GO:0006869">
    <property type="term" value="P:lipid transport"/>
    <property type="evidence" value="ECO:0007669"/>
    <property type="project" value="UniProtKB-KW"/>
</dbReference>
<dbReference type="GO" id="GO:0034727">
    <property type="term" value="P:piecemeal microautophagy of the nucleus"/>
    <property type="evidence" value="ECO:0007669"/>
    <property type="project" value="TreeGrafter"/>
</dbReference>
<dbReference type="GO" id="GO:0015031">
    <property type="term" value="P:protein transport"/>
    <property type="evidence" value="ECO:0007669"/>
    <property type="project" value="UniProtKB-KW"/>
</dbReference>
<dbReference type="GO" id="GO:0061709">
    <property type="term" value="P:reticulophagy"/>
    <property type="evidence" value="ECO:0007669"/>
    <property type="project" value="TreeGrafter"/>
</dbReference>
<dbReference type="InterPro" id="IPR026849">
    <property type="entry name" value="ATG2"/>
</dbReference>
<dbReference type="PANTHER" id="PTHR13190">
    <property type="entry name" value="AUTOPHAGY-RELATED 2, ISOFORM A"/>
    <property type="match status" value="1"/>
</dbReference>
<dbReference type="PANTHER" id="PTHR13190:SF1">
    <property type="entry name" value="AUTOPHAGY-RELATED 2, ISOFORM A"/>
    <property type="match status" value="1"/>
</dbReference>
<dbReference type="Pfam" id="PF13329">
    <property type="entry name" value="ATG2_CAD"/>
    <property type="match status" value="1"/>
</dbReference>
<gene>
    <name type="primary">ATG2</name>
    <name type="ORF">MGG_05998</name>
</gene>
<feature type="chain" id="PRO_0000215833" description="Autophagy-related protein 2">
    <location>
        <begin position="1"/>
        <end position="2094"/>
    </location>
</feature>
<feature type="region of interest" description="Disordered" evidence="3">
    <location>
        <begin position="287"/>
        <end position="336"/>
    </location>
</feature>
<feature type="region of interest" description="Disordered" evidence="3">
    <location>
        <begin position="348"/>
        <end position="369"/>
    </location>
</feature>
<feature type="region of interest" description="Disordered" evidence="3">
    <location>
        <begin position="429"/>
        <end position="449"/>
    </location>
</feature>
<feature type="region of interest" description="Disordered" evidence="3">
    <location>
        <begin position="486"/>
        <end position="511"/>
    </location>
</feature>
<feature type="region of interest" description="Disordered" evidence="3">
    <location>
        <begin position="523"/>
        <end position="587"/>
    </location>
</feature>
<feature type="region of interest" description="Disordered" evidence="3">
    <location>
        <begin position="643"/>
        <end position="665"/>
    </location>
</feature>
<feature type="region of interest" description="Disordered" evidence="3">
    <location>
        <begin position="708"/>
        <end position="727"/>
    </location>
</feature>
<feature type="region of interest" description="Disordered" evidence="3">
    <location>
        <begin position="885"/>
        <end position="917"/>
    </location>
</feature>
<feature type="region of interest" description="Disordered" evidence="3">
    <location>
        <begin position="2075"/>
        <end position="2094"/>
    </location>
</feature>
<feature type="compositionally biased region" description="Low complexity" evidence="3">
    <location>
        <begin position="289"/>
        <end position="307"/>
    </location>
</feature>
<feature type="compositionally biased region" description="Low complexity" evidence="3">
    <location>
        <begin position="429"/>
        <end position="441"/>
    </location>
</feature>
<feature type="compositionally biased region" description="Polar residues" evidence="3">
    <location>
        <begin position="487"/>
        <end position="508"/>
    </location>
</feature>
<feature type="compositionally biased region" description="Low complexity" evidence="3">
    <location>
        <begin position="542"/>
        <end position="555"/>
    </location>
</feature>
<feature type="compositionally biased region" description="Polar residues" evidence="3">
    <location>
        <begin position="712"/>
        <end position="727"/>
    </location>
</feature>
<feature type="compositionally biased region" description="Basic and acidic residues" evidence="3">
    <location>
        <begin position="2080"/>
        <end position="2094"/>
    </location>
</feature>
<keyword id="KW-0072">Autophagy</keyword>
<keyword id="KW-0256">Endoplasmic reticulum</keyword>
<keyword id="KW-0445">Lipid transport</keyword>
<keyword id="KW-0472">Membrane</keyword>
<keyword id="KW-0653">Protein transport</keyword>
<keyword id="KW-1185">Reference proteome</keyword>
<keyword id="KW-0813">Transport</keyword>
<sequence length="2094" mass="228485">MATLFQSFRGSAMPKRLLRYALARLDLLDSDALDLDNLDLAIGRNTVLEFRDVGIKLPKLAKLLGLPPTFTLLKAKVILLRVTIPMDIYSSSLKIEVDRVDVQLKVDSKDDIDGRSRTTIRGPTDVVPNTVDLAQSFLEQQSPKEKEELEAALSAETQDVGGSLVLGEDEDEQDEGSYGTGQALSLPAFLANFLQGIVDRTQIQIRGVTFQLDVSVPLEPNLNAPDVVTVKLALGQIDVEGVTTSLGSDEQDRPKFVHKEGKRLVSLQDITAFLISEANVFSTFERTTSVPPSLSPQSSAASALRSPVSRESTSMPFQEQEVEGRSTQLPSFEDNLGDSEAALNIPYDLSDEDDQEPGNKTAASSMSTPRASILHDHLAHQDESSSFLQGFTPYTAATPGIHLDADQMDEMSPQPAHDLSTHNQISLSNSVLSNSSSGSSGQEPTEDLTESHLYTHEDAESMYMSAFSQHEPTPQSVVPNELYIDPSESSVGVSSPQGTRDEPSSSLGATYGLEDSQASSTIGFQGLKTSPGLDASTISEQSDSSPAPIIPPSSDGNTEAGPESSIQGERHDRKSQSPNECLTPREPTRLAKKVLALDTLSLYLPSSQKSVHVVPLDGQSSPGEPQPLSPSLASSVFPHVPGAFGASTSLPPSPPPISPTSIELDNQEPNDGILEAILSPISIQFDASIGFILAMVVSRLLGAISPSKEEPAQQTAKDNPSATNQATDHQAVKVTLQAVSILFLERLGGVSEAPDSIFGVRTSKFDEDILLQAQLRNVQCLLSSDETVIDAEGFTFGYAGDDNHIISFDRSKEMMASVKDAVPSPGSEVSIKLKKGGPSSKIDIATLPLQICLDLRRLDETFSWFGGLSSFLNMGSSIASINGIGNSQPAKPPARPASRGVKFDTPINPDDRSATSDNKINMRINTVRLDLIGKDCNVILETSAFKLVSRDEGIGIALRKIQVHGPYSNESGPHPPISVTITGSRIEYSMTPKEADLERLLELISPSKLRDTPDDDEIMVDTLLRQRRKGSVLRLKFDNVAADISNIPHLGCLPSLGEDLARLGTVAKYLPEDDRPGLMSLILVRNAHVSVDVGGRFGVISASMAHFDVAHVSVPSLLAVAARSLEVNRNQIEELVGSSLLASHGDEETPVLVIRLIGGTVEPTITVKLRGLNVEYRVPTIIDLLNLGEDATPQDFEAGLAASVAQFGEQAHVAISGTSAITADSRTIGQDRQKLPVVELYFLDCVVGLNPLGMTSKMGIVLSDSCLKVWLEEKGDAKATWHIKQASILLIDDVALLDPEGKQNVKRHVHRPSDPVSAKIWDMDSVLCAQGFVSISQIRAAIIRVKAIQDEDGQRLIDVEVQDNFLVLETCADSTQTLIGLGNALKPPTPPSKENKFKTEIVPIEDMLASISQDAFGKAEGDYNFDDDFGEPEESDWTEDDLDEDLDIMGALGSQDDGQNTRQLLFDATSSSIMSDRTTTQYANDEVIFSGFSENPSHANSPDMSVENAFFASVPASETPQPEWKSAKMREVVPKEATIKKYPLKIKIRDMHLIWNLFDGYDWQRTRETIGKTVEEIQAKAYERRARMDRRMGYHEEDGLEEEAVSDFLFNSIYIGIPSHQDPRELSQNINQELYGINPSDTESVATTAFTTTTSRMGGPSRPKGKRLKLTRSKHHKITFELSGVNAVVRLLEPGSEETQSLIRVHIRDLDVYDHVPTSTWKRFAMYDEDHGPREMGVPMVDLKVRIVRPVLDVTAEEIVMFVNVLPLRLHVDQDALDFITRFFGFKDDTIKTTSSPSDVPFIQRAEIYDIPVKLDFKPKRVDYAGIRSGRTTEFMNFIILDNASMVMRHAIIYGALGFERFGEMLNDVWMPEIKRHQLPGVLAGLAPVRSLVDVGSGFRHLYEIPIREYKRNGRVVRSIGKGAAAFARTTGTELIKLGAKVAIGTQNMLQGAEGLLVETPEHNRYGVAGPSTVQRPGEWEEIDDSEEDIRHQISLYANQPTGVIQGLRHGYRSLSRDISIARQAIIAVPGEVRESSSATGAAKAVLEKAPIFIFRPAIGATKAIGQTLLGATNSLDPQNLRRMDNKYKPDPKS</sequence>
<organism>
    <name type="scientific">Pyricularia oryzae (strain 70-15 / ATCC MYA-4617 / FGSC 8958)</name>
    <name type="common">Rice blast fungus</name>
    <name type="synonym">Magnaporthe oryzae</name>
    <dbReference type="NCBI Taxonomy" id="242507"/>
    <lineage>
        <taxon>Eukaryota</taxon>
        <taxon>Fungi</taxon>
        <taxon>Dikarya</taxon>
        <taxon>Ascomycota</taxon>
        <taxon>Pezizomycotina</taxon>
        <taxon>Sordariomycetes</taxon>
        <taxon>Sordariomycetidae</taxon>
        <taxon>Magnaporthales</taxon>
        <taxon>Pyriculariaceae</taxon>
        <taxon>Pyricularia</taxon>
    </lineage>
</organism>
<reference key="1">
    <citation type="journal article" date="2005" name="Nature">
        <title>The genome sequence of the rice blast fungus Magnaporthe grisea.</title>
        <authorList>
            <person name="Dean R.A."/>
            <person name="Talbot N.J."/>
            <person name="Ebbole D.J."/>
            <person name="Farman M.L."/>
            <person name="Mitchell T.K."/>
            <person name="Orbach M.J."/>
            <person name="Thon M.R."/>
            <person name="Kulkarni R."/>
            <person name="Xu J.-R."/>
            <person name="Pan H."/>
            <person name="Read N.D."/>
            <person name="Lee Y.-H."/>
            <person name="Carbone I."/>
            <person name="Brown D."/>
            <person name="Oh Y.Y."/>
            <person name="Donofrio N."/>
            <person name="Jeong J.S."/>
            <person name="Soanes D.M."/>
            <person name="Djonovic S."/>
            <person name="Kolomiets E."/>
            <person name="Rehmeyer C."/>
            <person name="Li W."/>
            <person name="Harding M."/>
            <person name="Kim S."/>
            <person name="Lebrun M.-H."/>
            <person name="Bohnert H."/>
            <person name="Coughlan S."/>
            <person name="Butler J."/>
            <person name="Calvo S.E."/>
            <person name="Ma L.-J."/>
            <person name="Nicol R."/>
            <person name="Purcell S."/>
            <person name="Nusbaum C."/>
            <person name="Galagan J.E."/>
            <person name="Birren B.W."/>
        </authorList>
    </citation>
    <scope>NUCLEOTIDE SEQUENCE [LARGE SCALE GENOMIC DNA]</scope>
    <source>
        <strain>70-15 / ATCC MYA-4617 / FGSC 8958</strain>
    </source>
</reference>
<evidence type="ECO:0000250" key="1">
    <source>
        <dbReference type="UniProtKB" id="O94649"/>
    </source>
</evidence>
<evidence type="ECO:0000250" key="2">
    <source>
        <dbReference type="UniProtKB" id="P53855"/>
    </source>
</evidence>
<evidence type="ECO:0000256" key="3">
    <source>
        <dbReference type="SAM" id="MobiDB-lite"/>
    </source>
</evidence>
<evidence type="ECO:0000305" key="4"/>
<name>ATG2_PYRO7</name>
<proteinExistence type="inferred from homology"/>
<comment type="function">
    <text evidence="2">Lipid transfer protein required for autophagosome completion and peroxisome degradation. Tethers the edge of the isolation membrane (IM) to the endoplasmic reticulum (ER) and mediates direct lipid transfer from ER to IM for IM expansion. ATG2 binds to the ER exit site (ERES), which is the membrane source for autophagosome formation, using basic residues in its N-terminal region (NR) and to the expanding edge of the IM through its C-terminal region. The latter binding is assisted by an ATG18-PtdIns3P interaction. ATG2 then extracts phospholipids from the membrane source using its NR and transfers them to ATG9 to the IM through its predicted beta-sheet-rich structure for membrane expansion.</text>
</comment>
<comment type="catalytic activity">
    <reaction evidence="1">
        <text>a 1,2-diacyl-sn-glycero-3-phosphocholine(in) = a 1,2-diacyl-sn-glycero-3-phosphocholine(out)</text>
        <dbReference type="Rhea" id="RHEA:38571"/>
        <dbReference type="ChEBI" id="CHEBI:57643"/>
    </reaction>
</comment>
<comment type="catalytic activity">
    <reaction evidence="1">
        <text>a 1,2-diacyl-sn-glycero-3-phospho-L-serine(in) = a 1,2-diacyl-sn-glycero-3-phospho-L-serine(out)</text>
        <dbReference type="Rhea" id="RHEA:38663"/>
        <dbReference type="ChEBI" id="CHEBI:57262"/>
    </reaction>
</comment>
<comment type="catalytic activity">
    <reaction evidence="1">
        <text>a 1,2-diacyl-sn-glycero-3-phosphoethanolamine(in) = a 1,2-diacyl-sn-glycero-3-phosphoethanolamine(out)</text>
        <dbReference type="Rhea" id="RHEA:38895"/>
        <dbReference type="ChEBI" id="CHEBI:64612"/>
    </reaction>
</comment>
<comment type="subcellular location">
    <subcellularLocation>
        <location evidence="2">Preautophagosomal structure membrane</location>
        <topology evidence="2">Peripheral membrane protein</topology>
    </subcellularLocation>
    <subcellularLocation>
        <location evidence="2">Endoplasmic reticulum membrane</location>
        <topology evidence="2">Peripheral membrane protein</topology>
    </subcellularLocation>
</comment>
<comment type="similarity">
    <text evidence="4">Belongs to the ATG2 family.</text>
</comment>
<accession>Q51ZN8</accession>
<accession>A4QWH2</accession>
<accession>G4N4M2</accession>